<name>MT_PARLI</name>
<evidence type="ECO:0000305" key="1"/>
<accession>P80367</accession>
<proteinExistence type="evidence at protein level"/>
<reference key="1">
    <citation type="journal article" date="1995" name="Comp. Biochem. Physiol.">
        <title>Isolation and primary structure determination of a metallothionein from Paracentrotus lividus (Echinodermata, Echinoidea).</title>
        <authorList>
            <person name="Scudiero R."/>
            <person name="Capasso C."/>
            <person name="del Vecchio-Blanco F."/>
            <person name="Savino G."/>
            <person name="Capasso A."/>
            <person name="Parente A."/>
            <person name="Parisi E."/>
        </authorList>
    </citation>
    <scope>PROTEIN SEQUENCE</scope>
    <source>
        <tissue>Egg</tissue>
    </source>
</reference>
<reference key="2">
    <citation type="submission" date="1995-10" db="UniProtKB">
        <authorList>
            <person name="Scudiero R."/>
        </authorList>
    </citation>
    <scope>SEQUENCE REVISION</scope>
</reference>
<sequence length="65" mass="6435">PDTKCVCCQDGKQCPCAGQECCITGKCCKDGASVCCGTCSNAACKCTGGCKCEGGCVCTEGNCTC</sequence>
<feature type="chain" id="PRO_0000197346" description="Metallothionein">
    <location>
        <begin position="1"/>
        <end position="65"/>
    </location>
</feature>
<dbReference type="SMR" id="P80367"/>
<dbReference type="GO" id="GO:0046872">
    <property type="term" value="F:metal ion binding"/>
    <property type="evidence" value="ECO:0007669"/>
    <property type="project" value="UniProtKB-KW"/>
</dbReference>
<dbReference type="InterPro" id="IPR017980">
    <property type="entry name" value="Metalthion_4_echinoid/annelid"/>
</dbReference>
<dbReference type="InterPro" id="IPR001396">
    <property type="entry name" value="Metalthion_4_echinoidea"/>
</dbReference>
<dbReference type="InterPro" id="IPR017854">
    <property type="entry name" value="Metalthion_dom_sf"/>
</dbReference>
<dbReference type="Pfam" id="PF05522">
    <property type="entry name" value="Metallothio_6"/>
    <property type="match status" value="1"/>
</dbReference>
<dbReference type="PRINTS" id="PR00873">
    <property type="entry name" value="MTECHINOIDEA"/>
</dbReference>
<dbReference type="SUPFAM" id="SSF57868">
    <property type="entry name" value="Metallothionein"/>
    <property type="match status" value="2"/>
</dbReference>
<comment type="function">
    <text>Metallothioneins have a high content of cysteine residues that bind various heavy metals.</text>
</comment>
<comment type="similarity">
    <text evidence="1">Belongs to the metallothionein superfamily. Type 4 family.</text>
</comment>
<organism>
    <name type="scientific">Paracentrotus lividus</name>
    <name type="common">Common sea urchin</name>
    <dbReference type="NCBI Taxonomy" id="7656"/>
    <lineage>
        <taxon>Eukaryota</taxon>
        <taxon>Metazoa</taxon>
        <taxon>Echinodermata</taxon>
        <taxon>Eleutherozoa</taxon>
        <taxon>Echinozoa</taxon>
        <taxon>Echinoidea</taxon>
        <taxon>Euechinoidea</taxon>
        <taxon>Echinacea</taxon>
        <taxon>Camarodonta</taxon>
        <taxon>Echinidea</taxon>
        <taxon>Echinidae</taxon>
        <taxon>Paracentrotus</taxon>
    </lineage>
</organism>
<keyword id="KW-0903">Direct protein sequencing</keyword>
<keyword id="KW-0479">Metal-binding</keyword>
<keyword id="KW-0480">Metal-thiolate cluster</keyword>
<protein>
    <recommendedName>
        <fullName>Metallothionein</fullName>
        <shortName>MT</shortName>
    </recommendedName>
</protein>